<reference key="1">
    <citation type="submission" date="2008-12" db="EMBL/GenBank/DDBJ databases">
        <title>Complete sequence of chromosome of Shewanella baltica OS223.</title>
        <authorList>
            <consortium name="US DOE Joint Genome Institute"/>
            <person name="Lucas S."/>
            <person name="Copeland A."/>
            <person name="Lapidus A."/>
            <person name="Glavina del Rio T."/>
            <person name="Dalin E."/>
            <person name="Tice H."/>
            <person name="Bruce D."/>
            <person name="Goodwin L."/>
            <person name="Pitluck S."/>
            <person name="Chertkov O."/>
            <person name="Meincke L."/>
            <person name="Brettin T."/>
            <person name="Detter J.C."/>
            <person name="Han C."/>
            <person name="Kuske C.R."/>
            <person name="Larimer F."/>
            <person name="Land M."/>
            <person name="Hauser L."/>
            <person name="Kyrpides N."/>
            <person name="Ovchinnikova G."/>
            <person name="Brettar I."/>
            <person name="Rodrigues J."/>
            <person name="Konstantinidis K."/>
            <person name="Tiedje J."/>
        </authorList>
    </citation>
    <scope>NUCLEOTIDE SEQUENCE [LARGE SCALE GENOMIC DNA]</scope>
    <source>
        <strain>OS223</strain>
    </source>
</reference>
<comment type="similarity">
    <text evidence="1">Belongs to the UPF0434 family.</text>
</comment>
<dbReference type="EMBL" id="CP001252">
    <property type="protein sequence ID" value="ACK47162.1"/>
    <property type="molecule type" value="Genomic_DNA"/>
</dbReference>
<dbReference type="RefSeq" id="WP_006081200.1">
    <property type="nucleotide sequence ID" value="NC_011663.1"/>
</dbReference>
<dbReference type="SMR" id="B8EF44"/>
<dbReference type="KEGG" id="sbp:Sbal223_2672"/>
<dbReference type="HOGENOM" id="CLU_155659_3_1_6"/>
<dbReference type="Proteomes" id="UP000002507">
    <property type="component" value="Chromosome"/>
</dbReference>
<dbReference type="GO" id="GO:0005829">
    <property type="term" value="C:cytosol"/>
    <property type="evidence" value="ECO:0007669"/>
    <property type="project" value="TreeGrafter"/>
</dbReference>
<dbReference type="FunFam" id="2.20.25.10:FF:000002">
    <property type="entry name" value="UPF0434 protein YcaR"/>
    <property type="match status" value="1"/>
</dbReference>
<dbReference type="Gene3D" id="2.20.25.10">
    <property type="match status" value="1"/>
</dbReference>
<dbReference type="HAMAP" id="MF_01187">
    <property type="entry name" value="UPF0434"/>
    <property type="match status" value="1"/>
</dbReference>
<dbReference type="InterPro" id="IPR005651">
    <property type="entry name" value="Trm112-like"/>
</dbReference>
<dbReference type="PANTHER" id="PTHR33505:SF4">
    <property type="entry name" value="PROTEIN PREY, MITOCHONDRIAL"/>
    <property type="match status" value="1"/>
</dbReference>
<dbReference type="PANTHER" id="PTHR33505">
    <property type="entry name" value="ZGC:162634"/>
    <property type="match status" value="1"/>
</dbReference>
<dbReference type="Pfam" id="PF03966">
    <property type="entry name" value="Trm112p"/>
    <property type="match status" value="1"/>
</dbReference>
<dbReference type="SUPFAM" id="SSF158997">
    <property type="entry name" value="Trm112p-like"/>
    <property type="match status" value="1"/>
</dbReference>
<accession>B8EF44</accession>
<gene>
    <name type="ordered locus">Sbal223_2672</name>
</gene>
<sequence length="59" mass="6536">MAFDKKLLDIVACPVCKGKLEYDKTTQQLICKADKLAYPITEGIPVLLENRAVPLTESV</sequence>
<proteinExistence type="inferred from homology"/>
<evidence type="ECO:0000255" key="1">
    <source>
        <dbReference type="HAMAP-Rule" id="MF_01187"/>
    </source>
</evidence>
<feature type="chain" id="PRO_1000164490" description="UPF0434 protein Sbal223_2672">
    <location>
        <begin position="1"/>
        <end position="59"/>
    </location>
</feature>
<name>Y2672_SHEB2</name>
<organism>
    <name type="scientific">Shewanella baltica (strain OS223)</name>
    <dbReference type="NCBI Taxonomy" id="407976"/>
    <lineage>
        <taxon>Bacteria</taxon>
        <taxon>Pseudomonadati</taxon>
        <taxon>Pseudomonadota</taxon>
        <taxon>Gammaproteobacteria</taxon>
        <taxon>Alteromonadales</taxon>
        <taxon>Shewanellaceae</taxon>
        <taxon>Shewanella</taxon>
    </lineage>
</organism>
<protein>
    <recommendedName>
        <fullName evidence="1">UPF0434 protein Sbal223_2672</fullName>
    </recommendedName>
</protein>